<reference key="1">
    <citation type="journal article" date="2002" name="Nucleic Acids Res.">
        <title>Genome sequence of Shigella flexneri 2a: insights into pathogenicity through comparison with genomes of Escherichia coli K12 and O157.</title>
        <authorList>
            <person name="Jin Q."/>
            <person name="Yuan Z."/>
            <person name="Xu J."/>
            <person name="Wang Y."/>
            <person name="Shen Y."/>
            <person name="Lu W."/>
            <person name="Wang J."/>
            <person name="Liu H."/>
            <person name="Yang J."/>
            <person name="Yang F."/>
            <person name="Zhang X."/>
            <person name="Zhang J."/>
            <person name="Yang G."/>
            <person name="Wu H."/>
            <person name="Qu D."/>
            <person name="Dong J."/>
            <person name="Sun L."/>
            <person name="Xue Y."/>
            <person name="Zhao A."/>
            <person name="Gao Y."/>
            <person name="Zhu J."/>
            <person name="Kan B."/>
            <person name="Ding K."/>
            <person name="Chen S."/>
            <person name="Cheng H."/>
            <person name="Yao Z."/>
            <person name="He B."/>
            <person name="Chen R."/>
            <person name="Ma D."/>
            <person name="Qiang B."/>
            <person name="Wen Y."/>
            <person name="Hou Y."/>
            <person name="Yu J."/>
        </authorList>
    </citation>
    <scope>NUCLEOTIDE SEQUENCE [LARGE SCALE GENOMIC DNA]</scope>
    <source>
        <strain>301 / Serotype 2a</strain>
    </source>
</reference>
<reference key="2">
    <citation type="journal article" date="2003" name="Infect. Immun.">
        <title>Complete genome sequence and comparative genomics of Shigella flexneri serotype 2a strain 2457T.</title>
        <authorList>
            <person name="Wei J."/>
            <person name="Goldberg M.B."/>
            <person name="Burland V."/>
            <person name="Venkatesan M.M."/>
            <person name="Deng W."/>
            <person name="Fournier G."/>
            <person name="Mayhew G.F."/>
            <person name="Plunkett G. III"/>
            <person name="Rose D.J."/>
            <person name="Darling A."/>
            <person name="Mau B."/>
            <person name="Perna N.T."/>
            <person name="Payne S.M."/>
            <person name="Runyen-Janecky L.J."/>
            <person name="Zhou S."/>
            <person name="Schwartz D.C."/>
            <person name="Blattner F.R."/>
        </authorList>
    </citation>
    <scope>NUCLEOTIDE SEQUENCE [LARGE SCALE GENOMIC DNA]</scope>
    <source>
        <strain>ATCC 700930 / 2457T / Serotype 2a</strain>
    </source>
</reference>
<name>METJ_SHIFL</name>
<organism>
    <name type="scientific">Shigella flexneri</name>
    <dbReference type="NCBI Taxonomy" id="623"/>
    <lineage>
        <taxon>Bacteria</taxon>
        <taxon>Pseudomonadati</taxon>
        <taxon>Pseudomonadota</taxon>
        <taxon>Gammaproteobacteria</taxon>
        <taxon>Enterobacterales</taxon>
        <taxon>Enterobacteriaceae</taxon>
        <taxon>Shigella</taxon>
    </lineage>
</organism>
<accession>P0A8U9</accession>
<accession>P08338</accession>
<evidence type="ECO:0000250" key="1"/>
<evidence type="ECO:0000305" key="2"/>
<keyword id="KW-0028">Amino-acid biosynthesis</keyword>
<keyword id="KW-0963">Cytoplasm</keyword>
<keyword id="KW-0238">DNA-binding</keyword>
<keyword id="KW-0486">Methionine biosynthesis</keyword>
<keyword id="KW-1185">Reference proteome</keyword>
<keyword id="KW-0678">Repressor</keyword>
<keyword id="KW-0804">Transcription</keyword>
<keyword id="KW-0805">Transcription regulation</keyword>
<dbReference type="EMBL" id="AE005674">
    <property type="protein sequence ID" value="AAN45449.2"/>
    <property type="molecule type" value="Genomic_DNA"/>
</dbReference>
<dbReference type="EMBL" id="AE014073">
    <property type="protein sequence ID" value="AAP18751.1"/>
    <property type="molecule type" value="Genomic_DNA"/>
</dbReference>
<dbReference type="RefSeq" id="NP_709742.2">
    <property type="nucleotide sequence ID" value="NC_004337.2"/>
</dbReference>
<dbReference type="RefSeq" id="WP_000852812.1">
    <property type="nucleotide sequence ID" value="NZ_WPGW01000012.1"/>
</dbReference>
<dbReference type="SMR" id="P0A8U9"/>
<dbReference type="STRING" id="198214.SF4016"/>
<dbReference type="PaxDb" id="198214-SF4016"/>
<dbReference type="GeneID" id="1025431"/>
<dbReference type="GeneID" id="93777954"/>
<dbReference type="KEGG" id="sfl:SF4016"/>
<dbReference type="KEGG" id="sfx:S3731"/>
<dbReference type="PATRIC" id="fig|198214.7.peg.4732"/>
<dbReference type="HOGENOM" id="CLU_142318_0_0_6"/>
<dbReference type="Proteomes" id="UP000001006">
    <property type="component" value="Chromosome"/>
</dbReference>
<dbReference type="Proteomes" id="UP000002673">
    <property type="component" value="Chromosome"/>
</dbReference>
<dbReference type="GO" id="GO:0005737">
    <property type="term" value="C:cytoplasm"/>
    <property type="evidence" value="ECO:0007669"/>
    <property type="project" value="UniProtKB-SubCell"/>
</dbReference>
<dbReference type="GO" id="GO:0003677">
    <property type="term" value="F:DNA binding"/>
    <property type="evidence" value="ECO:0007669"/>
    <property type="project" value="UniProtKB-KW"/>
</dbReference>
<dbReference type="GO" id="GO:0003700">
    <property type="term" value="F:DNA-binding transcription factor activity"/>
    <property type="evidence" value="ECO:0007669"/>
    <property type="project" value="InterPro"/>
</dbReference>
<dbReference type="GO" id="GO:0009086">
    <property type="term" value="P:methionine biosynthetic process"/>
    <property type="evidence" value="ECO:0007669"/>
    <property type="project" value="UniProtKB-UniRule"/>
</dbReference>
<dbReference type="GO" id="GO:0045892">
    <property type="term" value="P:negative regulation of DNA-templated transcription"/>
    <property type="evidence" value="ECO:0007669"/>
    <property type="project" value="UniProtKB-UniRule"/>
</dbReference>
<dbReference type="CDD" id="cd00490">
    <property type="entry name" value="Met_repressor_MetJ"/>
    <property type="match status" value="1"/>
</dbReference>
<dbReference type="FunFam" id="1.10.140.10:FF:000001">
    <property type="entry name" value="Met repressor"/>
    <property type="match status" value="1"/>
</dbReference>
<dbReference type="Gene3D" id="1.10.140.10">
    <property type="entry name" value="MET Apo-Repressor, subunit A"/>
    <property type="match status" value="1"/>
</dbReference>
<dbReference type="HAMAP" id="MF_00744">
    <property type="entry name" value="MetJ"/>
    <property type="match status" value="1"/>
</dbReference>
<dbReference type="InterPro" id="IPR002084">
    <property type="entry name" value="Met_repressor_MetJ"/>
</dbReference>
<dbReference type="InterPro" id="IPR023453">
    <property type="entry name" value="Met_repressor_MetJ_dom_sf"/>
</dbReference>
<dbReference type="InterPro" id="IPR010985">
    <property type="entry name" value="Ribbon_hlx_hlx"/>
</dbReference>
<dbReference type="NCBIfam" id="NF003622">
    <property type="entry name" value="PRK05264.1"/>
    <property type="match status" value="1"/>
</dbReference>
<dbReference type="Pfam" id="PF01340">
    <property type="entry name" value="MetJ"/>
    <property type="match status" value="1"/>
</dbReference>
<dbReference type="SUPFAM" id="SSF47598">
    <property type="entry name" value="Ribbon-helix-helix"/>
    <property type="match status" value="1"/>
</dbReference>
<sequence>MAEWSGEYISPYAEHGKKSEQVKKITVSIPLKVLKILTDERTRRQVNNLRHATNSELLCEAFLHAFTGQPLPDDADLRKERSDEIPEAAKEIMREMGINPETWEY</sequence>
<gene>
    <name type="primary">metJ</name>
    <name type="ordered locus">SF4016</name>
    <name type="ordered locus">S3731</name>
</gene>
<protein>
    <recommendedName>
        <fullName>Met repressor</fullName>
    </recommendedName>
    <alternativeName>
        <fullName>Met regulon regulatory protein MetJ</fullName>
    </alternativeName>
</protein>
<feature type="initiator methionine" description="Removed" evidence="1">
    <location>
        <position position="1"/>
    </location>
</feature>
<feature type="chain" id="PRO_0000198407" description="Met repressor">
    <location>
        <begin position="2"/>
        <end position="105"/>
    </location>
</feature>
<comment type="function">
    <text evidence="1">This regulatory protein, when combined with SAM (S-adenosylmethionine) represses the expression of the methionine regulon and of enzymes involved in SAM synthesis.</text>
</comment>
<comment type="subunit">
    <text evidence="1">Homodimer.</text>
</comment>
<comment type="subcellular location">
    <subcellularLocation>
        <location evidence="1">Cytoplasm</location>
    </subcellularLocation>
</comment>
<comment type="domain">
    <text>Does not bind DNA by a helix-turn-helix motif.</text>
</comment>
<comment type="similarity">
    <text evidence="2">Belongs to the MetJ family.</text>
</comment>
<proteinExistence type="inferred from homology"/>